<dbReference type="EC" id="1.3.7.7" evidence="1"/>
<dbReference type="EMBL" id="BA000039">
    <property type="protein sequence ID" value="BAC09944.1"/>
    <property type="molecule type" value="Genomic_DNA"/>
</dbReference>
<dbReference type="RefSeq" id="NP_683182.1">
    <property type="nucleotide sequence ID" value="NC_004113.1"/>
</dbReference>
<dbReference type="RefSeq" id="WP_011058224.1">
    <property type="nucleotide sequence ID" value="NC_004113.1"/>
</dbReference>
<dbReference type="PDB" id="2XDQ">
    <property type="method" value="X-ray"/>
    <property type="resolution" value="2.40 A"/>
    <property type="chains" value="B=1-508"/>
</dbReference>
<dbReference type="PDBsum" id="2XDQ"/>
<dbReference type="SMR" id="Q8DGC6"/>
<dbReference type="STRING" id="197221.gene:10749012"/>
<dbReference type="EnsemblBacteria" id="BAC09944">
    <property type="protein sequence ID" value="BAC09944"/>
    <property type="gene ID" value="BAC09944"/>
</dbReference>
<dbReference type="KEGG" id="tel:tll2392"/>
<dbReference type="PATRIC" id="fig|197221.4.peg.2512"/>
<dbReference type="eggNOG" id="COG2710">
    <property type="taxonomic scope" value="Bacteria"/>
</dbReference>
<dbReference type="UniPathway" id="UPA00670"/>
<dbReference type="EvolutionaryTrace" id="Q8DGC6"/>
<dbReference type="Proteomes" id="UP000000440">
    <property type="component" value="Chromosome"/>
</dbReference>
<dbReference type="GO" id="GO:0051539">
    <property type="term" value="F:4 iron, 4 sulfur cluster binding"/>
    <property type="evidence" value="ECO:0007669"/>
    <property type="project" value="UniProtKB-UniRule"/>
</dbReference>
<dbReference type="GO" id="GO:0005524">
    <property type="term" value="F:ATP binding"/>
    <property type="evidence" value="ECO:0007669"/>
    <property type="project" value="UniProtKB-UniRule"/>
</dbReference>
<dbReference type="GO" id="GO:0046872">
    <property type="term" value="F:metal ion binding"/>
    <property type="evidence" value="ECO:0007669"/>
    <property type="project" value="UniProtKB-KW"/>
</dbReference>
<dbReference type="GO" id="GO:0016730">
    <property type="term" value="F:oxidoreductase activity, acting on iron-sulfur proteins as donors"/>
    <property type="evidence" value="ECO:0007669"/>
    <property type="project" value="InterPro"/>
</dbReference>
<dbReference type="GO" id="GO:0016636">
    <property type="term" value="F:oxidoreductase activity, acting on the CH-CH group of donors, iron-sulfur protein as acceptor"/>
    <property type="evidence" value="ECO:0007669"/>
    <property type="project" value="UniProtKB-UniRule"/>
</dbReference>
<dbReference type="GO" id="GO:0036068">
    <property type="term" value="P:light-independent chlorophyll biosynthetic process"/>
    <property type="evidence" value="ECO:0007669"/>
    <property type="project" value="UniProtKB-UniRule"/>
</dbReference>
<dbReference type="GO" id="GO:0019685">
    <property type="term" value="P:photosynthesis, dark reaction"/>
    <property type="evidence" value="ECO:0007669"/>
    <property type="project" value="InterPro"/>
</dbReference>
<dbReference type="CDD" id="cd01981">
    <property type="entry name" value="Pchlide_reductase_B"/>
    <property type="match status" value="1"/>
</dbReference>
<dbReference type="Gene3D" id="1.20.89.20">
    <property type="match status" value="1"/>
</dbReference>
<dbReference type="Gene3D" id="3.40.50.1980">
    <property type="entry name" value="Nitrogenase molybdenum iron protein domain"/>
    <property type="match status" value="3"/>
</dbReference>
<dbReference type="Gene3D" id="1.10.8.550">
    <property type="entry name" value="Proto-chlorophyllide reductase 57 kD subunit B"/>
    <property type="match status" value="1"/>
</dbReference>
<dbReference type="HAMAP" id="MF_00353">
    <property type="entry name" value="ChlB_BchB"/>
    <property type="match status" value="1"/>
</dbReference>
<dbReference type="InterPro" id="IPR050152">
    <property type="entry name" value="ChlB/BchB/BchZ"/>
</dbReference>
<dbReference type="InterPro" id="IPR013580">
    <property type="entry name" value="LI-POR_suB-like_C"/>
</dbReference>
<dbReference type="InterPro" id="IPR000510">
    <property type="entry name" value="Nase/OxRdtase_comp1"/>
</dbReference>
<dbReference type="InterPro" id="IPR042298">
    <property type="entry name" value="P-CP_red_C"/>
</dbReference>
<dbReference type="InterPro" id="IPR005969">
    <property type="entry name" value="Protochl_reductB"/>
</dbReference>
<dbReference type="InterPro" id="IPR016209">
    <property type="entry name" value="Protochlorophyllide_Rdtase"/>
</dbReference>
<dbReference type="NCBIfam" id="TIGR01278">
    <property type="entry name" value="DPOR_BchB"/>
    <property type="match status" value="1"/>
</dbReference>
<dbReference type="PANTHER" id="PTHR33712">
    <property type="entry name" value="LIGHT-INDEPENDENT PROTOCHLOROPHYLLIDE REDUCTASE SUBUNIT B"/>
    <property type="match status" value="1"/>
</dbReference>
<dbReference type="PANTHER" id="PTHR33712:SF7">
    <property type="entry name" value="LIGHT-INDEPENDENT PROTOCHLOROPHYLLIDE REDUCTASE SUBUNIT B"/>
    <property type="match status" value="1"/>
</dbReference>
<dbReference type="Pfam" id="PF00148">
    <property type="entry name" value="Oxidored_nitro"/>
    <property type="match status" value="1"/>
</dbReference>
<dbReference type="Pfam" id="PF08369">
    <property type="entry name" value="PCP_red"/>
    <property type="match status" value="1"/>
</dbReference>
<dbReference type="PIRSF" id="PIRSF000163">
    <property type="entry name" value="PCP_ChlB"/>
    <property type="match status" value="1"/>
</dbReference>
<dbReference type="SUPFAM" id="SSF53807">
    <property type="entry name" value="Helical backbone' metal receptor"/>
    <property type="match status" value="1"/>
</dbReference>
<sequence>MKLAYWMYAGPAHIGTLRIASSFKNVHGIMHAPLGDDYFNVMRSMLERERDFTPVTASIVDRHVLARGSQEKVVDNIIRKDTEEHPDLIVLTPTCTSSILQEDLQNFVRRASLSTTADVLLADVNHYRVNELQAADRTLEQIVQFYIDKARRQGTLGTSKTPTPSVNIIGITTLGFHNQHDCRELKQLMADLGIQVNLVIPAAATVHDLQRLPQAWFNLVPYREIGGLTAQYLEREFGQPSVRITPMGVVETARCIRAIQGVLNAQGAGVNYEAFIEQQTREVSQAAWFSRSIDCQNLTGKKAVVFGDNTHAAAMTKILSREMGIHVVWAGTYCKYDADWFRAEVAGFCDEVLITDDHTVVGDAIARVEPAAIFGTQMERHVGKRLNIPCGVIAAPIHIQDFPVGYRPFLGYEGTNQLVDLIYNSFTLGMEDHLLEIFGGHDTKAVIHKGLSADSDLTWTAAGLAELNKIPGFVRGKVKRNTEKFAREQGISEITVEVLYAAKEAVGA</sequence>
<reference key="1">
    <citation type="journal article" date="2002" name="DNA Res.">
        <title>Complete genome structure of the thermophilic cyanobacterium Thermosynechococcus elongatus BP-1.</title>
        <authorList>
            <person name="Nakamura Y."/>
            <person name="Kaneko T."/>
            <person name="Sato S."/>
            <person name="Ikeuchi M."/>
            <person name="Katoh H."/>
            <person name="Sasamoto S."/>
            <person name="Watanabe A."/>
            <person name="Iriguchi M."/>
            <person name="Kawashima K."/>
            <person name="Kimura T."/>
            <person name="Kishida Y."/>
            <person name="Kiyokawa C."/>
            <person name="Kohara M."/>
            <person name="Matsumoto M."/>
            <person name="Matsuno A."/>
            <person name="Nakazaki N."/>
            <person name="Shimpo S."/>
            <person name="Sugimoto M."/>
            <person name="Takeuchi C."/>
            <person name="Yamada M."/>
            <person name="Tabata S."/>
        </authorList>
    </citation>
    <scope>NUCLEOTIDE SEQUENCE [LARGE SCALE GENOMIC DNA]</scope>
    <source>
        <strain>NIES-2133 / IAM M-273 / BP-1</strain>
    </source>
</reference>
<evidence type="ECO:0000255" key="1">
    <source>
        <dbReference type="HAMAP-Rule" id="MF_00353"/>
    </source>
</evidence>
<evidence type="ECO:0007829" key="2">
    <source>
        <dbReference type="PDB" id="2XDQ"/>
    </source>
</evidence>
<protein>
    <recommendedName>
        <fullName evidence="1">Light-independent protochlorophyllide reductase subunit B</fullName>
        <shortName evidence="1">DPOR subunit B</shortName>
        <shortName evidence="1">LI-POR subunit B</shortName>
        <ecNumber evidence="1">1.3.7.7</ecNumber>
    </recommendedName>
</protein>
<gene>
    <name evidence="1" type="primary">chlB</name>
    <name type="ordered locus">tll2392</name>
</gene>
<feature type="chain" id="PRO_0000219805" description="Light-independent protochlorophyllide reductase subunit B">
    <location>
        <begin position="1"/>
        <end position="508"/>
    </location>
</feature>
<feature type="active site" description="Proton donor" evidence="1">
    <location>
        <position position="294"/>
    </location>
</feature>
<feature type="binding site" evidence="1">
    <location>
        <position position="36"/>
    </location>
    <ligand>
        <name>[4Fe-4S] cluster</name>
        <dbReference type="ChEBI" id="CHEBI:49883"/>
        <note>ligand shared with heterodimeric partner</note>
    </ligand>
</feature>
<feature type="binding site" evidence="1">
    <location>
        <begin position="429"/>
        <end position="430"/>
    </location>
    <ligand>
        <name>substrate</name>
    </ligand>
</feature>
<feature type="strand" evidence="2">
    <location>
        <begin position="2"/>
        <end position="5"/>
    </location>
</feature>
<feature type="helix" evidence="2">
    <location>
        <begin position="12"/>
        <end position="20"/>
    </location>
</feature>
<feature type="strand" evidence="2">
    <location>
        <begin position="26"/>
        <end position="32"/>
    </location>
</feature>
<feature type="turn" evidence="2">
    <location>
        <begin position="34"/>
        <end position="37"/>
    </location>
</feature>
<feature type="helix" evidence="2">
    <location>
        <begin position="38"/>
        <end position="46"/>
    </location>
</feature>
<feature type="strand" evidence="2">
    <location>
        <begin position="54"/>
        <end position="59"/>
    </location>
</feature>
<feature type="turn" evidence="2">
    <location>
        <begin position="62"/>
        <end position="67"/>
    </location>
</feature>
<feature type="strand" evidence="2">
    <location>
        <begin position="69"/>
        <end position="71"/>
    </location>
</feature>
<feature type="helix" evidence="2">
    <location>
        <begin position="72"/>
        <end position="84"/>
    </location>
</feature>
<feature type="strand" evidence="2">
    <location>
        <begin position="87"/>
        <end position="92"/>
    </location>
</feature>
<feature type="helix" evidence="2">
    <location>
        <begin position="95"/>
        <end position="98"/>
    </location>
</feature>
<feature type="helix" evidence="2">
    <location>
        <begin position="104"/>
        <end position="114"/>
    </location>
</feature>
<feature type="strand" evidence="2">
    <location>
        <begin position="116"/>
        <end position="121"/>
    </location>
</feature>
<feature type="turn" evidence="2">
    <location>
        <begin position="126"/>
        <end position="128"/>
    </location>
</feature>
<feature type="helix" evidence="2">
    <location>
        <begin position="131"/>
        <end position="153"/>
    </location>
</feature>
<feature type="strand" evidence="2">
    <location>
        <begin position="165"/>
        <end position="171"/>
    </location>
</feature>
<feature type="helix" evidence="2">
    <location>
        <begin position="178"/>
        <end position="192"/>
    </location>
</feature>
<feature type="strand" evidence="2">
    <location>
        <begin position="195"/>
        <end position="201"/>
    </location>
</feature>
<feature type="turn" evidence="2">
    <location>
        <begin position="206"/>
        <end position="208"/>
    </location>
</feature>
<feature type="helix" evidence="2">
    <location>
        <begin position="209"/>
        <end position="214"/>
    </location>
</feature>
<feature type="strand" evidence="2">
    <location>
        <begin position="215"/>
        <end position="219"/>
    </location>
</feature>
<feature type="helix" evidence="2">
    <location>
        <begin position="227"/>
        <end position="237"/>
    </location>
</feature>
<feature type="helix" evidence="2">
    <location>
        <begin position="249"/>
        <end position="264"/>
    </location>
</feature>
<feature type="turn" evidence="2">
    <location>
        <begin position="265"/>
        <end position="267"/>
    </location>
</feature>
<feature type="helix" evidence="2">
    <location>
        <begin position="273"/>
        <end position="282"/>
    </location>
</feature>
<feature type="helix" evidence="2">
    <location>
        <begin position="286"/>
        <end position="291"/>
    </location>
</feature>
<feature type="helix" evidence="2">
    <location>
        <begin position="293"/>
        <end position="296"/>
    </location>
</feature>
<feature type="turn" evidence="2">
    <location>
        <begin position="297"/>
        <end position="300"/>
    </location>
</feature>
<feature type="strand" evidence="2">
    <location>
        <begin position="302"/>
        <end position="307"/>
    </location>
</feature>
<feature type="helix" evidence="2">
    <location>
        <begin position="309"/>
        <end position="323"/>
    </location>
</feature>
<feature type="strand" evidence="2">
    <location>
        <begin position="326"/>
        <end position="333"/>
    </location>
</feature>
<feature type="helix" evidence="2">
    <location>
        <begin position="335"/>
        <end position="337"/>
    </location>
</feature>
<feature type="helix" evidence="2">
    <location>
        <begin position="338"/>
        <end position="345"/>
    </location>
</feature>
<feature type="turn" evidence="2">
    <location>
        <begin position="346"/>
        <end position="348"/>
    </location>
</feature>
<feature type="strand" evidence="2">
    <location>
        <begin position="349"/>
        <end position="354"/>
    </location>
</feature>
<feature type="helix" evidence="2">
    <location>
        <begin position="358"/>
        <end position="368"/>
    </location>
</feature>
<feature type="strand" evidence="2">
    <location>
        <begin position="371"/>
        <end position="375"/>
    </location>
</feature>
<feature type="helix" evidence="2">
    <location>
        <begin position="377"/>
        <end position="386"/>
    </location>
</feature>
<feature type="strand" evidence="2">
    <location>
        <begin position="390"/>
        <end position="392"/>
    </location>
</feature>
<feature type="strand" evidence="2">
    <location>
        <begin position="394"/>
        <end position="396"/>
    </location>
</feature>
<feature type="helix" evidence="2">
    <location>
        <begin position="399"/>
        <end position="401"/>
    </location>
</feature>
<feature type="helix" evidence="2">
    <location>
        <begin position="411"/>
        <end position="438"/>
    </location>
</feature>
<comment type="function">
    <text evidence="1">Component of the dark-operative protochlorophyllide reductase (DPOR) that uses Mg-ATP and reduced ferredoxin to reduce ring D of protochlorophyllide (Pchlide) to form chlorophyllide a (Chlide). This reaction is light-independent. The NB-protein (ChlN-ChlB) is the catalytic component of the complex.</text>
</comment>
<comment type="catalytic activity">
    <reaction evidence="1">
        <text>chlorophyllide a + oxidized 2[4Fe-4S]-[ferredoxin] + 2 ADP + 2 phosphate = protochlorophyllide a + reduced 2[4Fe-4S]-[ferredoxin] + 2 ATP + 2 H2O</text>
        <dbReference type="Rhea" id="RHEA:28202"/>
        <dbReference type="Rhea" id="RHEA-COMP:10002"/>
        <dbReference type="Rhea" id="RHEA-COMP:10004"/>
        <dbReference type="ChEBI" id="CHEBI:15377"/>
        <dbReference type="ChEBI" id="CHEBI:30616"/>
        <dbReference type="ChEBI" id="CHEBI:33722"/>
        <dbReference type="ChEBI" id="CHEBI:33723"/>
        <dbReference type="ChEBI" id="CHEBI:43474"/>
        <dbReference type="ChEBI" id="CHEBI:83348"/>
        <dbReference type="ChEBI" id="CHEBI:83350"/>
        <dbReference type="ChEBI" id="CHEBI:456216"/>
        <dbReference type="EC" id="1.3.7.7"/>
    </reaction>
</comment>
<comment type="cofactor">
    <cofactor evidence="1">
        <name>[4Fe-4S] cluster</name>
        <dbReference type="ChEBI" id="CHEBI:49883"/>
    </cofactor>
    <text evidence="1">Binds 1 [4Fe-4S] cluster per heterodimer. The cluster is bound at the heterodimer interface by residues from both subunits.</text>
</comment>
<comment type="pathway">
    <text evidence="1">Porphyrin-containing compound metabolism; chlorophyll biosynthesis (light-independent).</text>
</comment>
<comment type="subunit">
    <text evidence="1">Protochlorophyllide reductase is composed of three subunits; ChlL, ChlN and ChlB. Forms a heterotetramer of two ChlB and two ChlN subunits.</text>
</comment>
<comment type="similarity">
    <text evidence="1">Belongs to the ChlB/BchB/BchZ family.</text>
</comment>
<name>CHLB_THEVB</name>
<accession>Q8DGC6</accession>
<organism>
    <name type="scientific">Thermosynechococcus vestitus (strain NIES-2133 / IAM M-273 / BP-1)</name>
    <dbReference type="NCBI Taxonomy" id="197221"/>
    <lineage>
        <taxon>Bacteria</taxon>
        <taxon>Bacillati</taxon>
        <taxon>Cyanobacteriota</taxon>
        <taxon>Cyanophyceae</taxon>
        <taxon>Acaryochloridales</taxon>
        <taxon>Thermosynechococcaceae</taxon>
        <taxon>Thermosynechococcus</taxon>
    </lineage>
</organism>
<keyword id="KW-0002">3D-structure</keyword>
<keyword id="KW-0004">4Fe-4S</keyword>
<keyword id="KW-0067">ATP-binding</keyword>
<keyword id="KW-0149">Chlorophyll biosynthesis</keyword>
<keyword id="KW-0408">Iron</keyword>
<keyword id="KW-0411">Iron-sulfur</keyword>
<keyword id="KW-0479">Metal-binding</keyword>
<keyword id="KW-0547">Nucleotide-binding</keyword>
<keyword id="KW-0560">Oxidoreductase</keyword>
<keyword id="KW-0602">Photosynthesis</keyword>
<keyword id="KW-1185">Reference proteome</keyword>
<proteinExistence type="evidence at protein level"/>